<dbReference type="EMBL" id="CP000683">
    <property type="protein sequence ID" value="ABV85068.1"/>
    <property type="molecule type" value="Genomic_DNA"/>
</dbReference>
<dbReference type="RefSeq" id="WP_012153034.1">
    <property type="nucleotide sequence ID" value="NC_009900.1"/>
</dbReference>
<dbReference type="SMR" id="A8F2D2"/>
<dbReference type="KEGG" id="rms:RMA_1025"/>
<dbReference type="HOGENOM" id="CLU_065464_1_2_5"/>
<dbReference type="Proteomes" id="UP000001311">
    <property type="component" value="Chromosome"/>
</dbReference>
<dbReference type="GO" id="GO:1990904">
    <property type="term" value="C:ribonucleoprotein complex"/>
    <property type="evidence" value="ECO:0007669"/>
    <property type="project" value="UniProtKB-KW"/>
</dbReference>
<dbReference type="GO" id="GO:0005840">
    <property type="term" value="C:ribosome"/>
    <property type="evidence" value="ECO:0007669"/>
    <property type="project" value="UniProtKB-KW"/>
</dbReference>
<dbReference type="GO" id="GO:0019843">
    <property type="term" value="F:rRNA binding"/>
    <property type="evidence" value="ECO:0007669"/>
    <property type="project" value="UniProtKB-UniRule"/>
</dbReference>
<dbReference type="GO" id="GO:0003735">
    <property type="term" value="F:structural constituent of ribosome"/>
    <property type="evidence" value="ECO:0007669"/>
    <property type="project" value="InterPro"/>
</dbReference>
<dbReference type="GO" id="GO:0002181">
    <property type="term" value="P:cytoplasmic translation"/>
    <property type="evidence" value="ECO:0007669"/>
    <property type="project" value="TreeGrafter"/>
</dbReference>
<dbReference type="FunFam" id="3.90.930.12:FF:000002">
    <property type="entry name" value="50S ribosomal protein L6"/>
    <property type="match status" value="1"/>
</dbReference>
<dbReference type="Gene3D" id="3.90.930.12">
    <property type="entry name" value="Ribosomal protein L6, alpha-beta domain"/>
    <property type="match status" value="2"/>
</dbReference>
<dbReference type="HAMAP" id="MF_01365_B">
    <property type="entry name" value="Ribosomal_uL6_B"/>
    <property type="match status" value="1"/>
</dbReference>
<dbReference type="InterPro" id="IPR000702">
    <property type="entry name" value="Ribosomal_uL6-like"/>
</dbReference>
<dbReference type="InterPro" id="IPR036789">
    <property type="entry name" value="Ribosomal_uL6-like_a/b-dom_sf"/>
</dbReference>
<dbReference type="InterPro" id="IPR020040">
    <property type="entry name" value="Ribosomal_uL6_a/b-dom"/>
</dbReference>
<dbReference type="InterPro" id="IPR019906">
    <property type="entry name" value="Ribosomal_uL6_bac-type"/>
</dbReference>
<dbReference type="InterPro" id="IPR002358">
    <property type="entry name" value="Ribosomal_uL6_CS"/>
</dbReference>
<dbReference type="NCBIfam" id="TIGR03654">
    <property type="entry name" value="L6_bact"/>
    <property type="match status" value="1"/>
</dbReference>
<dbReference type="PANTHER" id="PTHR11655">
    <property type="entry name" value="60S/50S RIBOSOMAL PROTEIN L6/L9"/>
    <property type="match status" value="1"/>
</dbReference>
<dbReference type="PANTHER" id="PTHR11655:SF14">
    <property type="entry name" value="LARGE RIBOSOMAL SUBUNIT PROTEIN UL6M"/>
    <property type="match status" value="1"/>
</dbReference>
<dbReference type="Pfam" id="PF00347">
    <property type="entry name" value="Ribosomal_L6"/>
    <property type="match status" value="2"/>
</dbReference>
<dbReference type="PIRSF" id="PIRSF002162">
    <property type="entry name" value="Ribosomal_L6"/>
    <property type="match status" value="1"/>
</dbReference>
<dbReference type="PRINTS" id="PR00059">
    <property type="entry name" value="RIBOSOMALL6"/>
</dbReference>
<dbReference type="SUPFAM" id="SSF56053">
    <property type="entry name" value="Ribosomal protein L6"/>
    <property type="match status" value="2"/>
</dbReference>
<dbReference type="PROSITE" id="PS00525">
    <property type="entry name" value="RIBOSOMAL_L6_1"/>
    <property type="match status" value="1"/>
</dbReference>
<proteinExistence type="inferred from homology"/>
<gene>
    <name evidence="1" type="primary">rplF</name>
    <name type="ordered locus">RMA_1025</name>
</gene>
<evidence type="ECO:0000255" key="1">
    <source>
        <dbReference type="HAMAP-Rule" id="MF_01365"/>
    </source>
</evidence>
<evidence type="ECO:0000305" key="2"/>
<accession>A8F2D2</accession>
<keyword id="KW-0687">Ribonucleoprotein</keyword>
<keyword id="KW-0689">Ribosomal protein</keyword>
<keyword id="KW-0694">RNA-binding</keyword>
<keyword id="KW-0699">rRNA-binding</keyword>
<name>RL6_RICM5</name>
<reference key="1">
    <citation type="journal article" date="2007" name="Genome Res.">
        <title>Lateral gene transfer between obligate intracellular bacteria: evidence from the Rickettsia massiliae genome.</title>
        <authorList>
            <person name="Blanc G."/>
            <person name="Ogata H."/>
            <person name="Robert C."/>
            <person name="Audic S."/>
            <person name="Claverie J.-M."/>
            <person name="Raoult D."/>
        </authorList>
    </citation>
    <scope>NUCLEOTIDE SEQUENCE [LARGE SCALE GENOMIC DNA]</scope>
    <source>
        <strain>Mtu5</strain>
    </source>
</reference>
<protein>
    <recommendedName>
        <fullName evidence="1">Large ribosomal subunit protein uL6</fullName>
    </recommendedName>
    <alternativeName>
        <fullName evidence="2">50S ribosomal protein L6</fullName>
    </alternativeName>
</protein>
<comment type="function">
    <text evidence="1">This protein binds to the 23S rRNA, and is important in its secondary structure. It is located near the subunit interface in the base of the L7/L12 stalk, and near the tRNA binding site of the peptidyltransferase center.</text>
</comment>
<comment type="subunit">
    <text evidence="1">Part of the 50S ribosomal subunit.</text>
</comment>
<comment type="similarity">
    <text evidence="1">Belongs to the universal ribosomal protein uL6 family.</text>
</comment>
<sequence length="177" mass="19594">MSRVGKLPITIPEGVKIGLNDLEVKISGPKGELSKTFKGNIAISLVENKLLVKPLAANKNARAMWGTARSIISNMVTGVKEGFKLKLEINGVGYRAMVKGKYLNLMLAKSHNTKIEIPSDIKIEMPKQNIIILEGTDKEKLGQFASIIIKQRPPEPYKGKGIKFENQFIPRKEGKKN</sequence>
<feature type="chain" id="PRO_1000067981" description="Large ribosomal subunit protein uL6">
    <location>
        <begin position="1"/>
        <end position="177"/>
    </location>
</feature>
<organism>
    <name type="scientific">Rickettsia massiliae (strain Mtu5)</name>
    <dbReference type="NCBI Taxonomy" id="416276"/>
    <lineage>
        <taxon>Bacteria</taxon>
        <taxon>Pseudomonadati</taxon>
        <taxon>Pseudomonadota</taxon>
        <taxon>Alphaproteobacteria</taxon>
        <taxon>Rickettsiales</taxon>
        <taxon>Rickettsiaceae</taxon>
        <taxon>Rickettsieae</taxon>
        <taxon>Rickettsia</taxon>
        <taxon>spotted fever group</taxon>
    </lineage>
</organism>